<keyword id="KW-0002">3D-structure</keyword>
<keyword id="KW-0156">Chromatin regulator</keyword>
<keyword id="KW-0175">Coiled coil</keyword>
<keyword id="KW-0479">Metal-binding</keyword>
<keyword id="KW-0539">Nucleus</keyword>
<keyword id="KW-1185">Reference proteome</keyword>
<keyword id="KW-0808">Transferase</keyword>
<keyword id="KW-0833">Ubl conjugation pathway</keyword>
<keyword id="KW-0862">Zinc</keyword>
<keyword id="KW-0863">Zinc-finger</keyword>
<organism>
    <name type="scientific">Saccharomyces cerevisiae (strain ATCC 204508 / S288c)</name>
    <name type="common">Baker's yeast</name>
    <dbReference type="NCBI Taxonomy" id="559292"/>
    <lineage>
        <taxon>Eukaryota</taxon>
        <taxon>Fungi</taxon>
        <taxon>Dikarya</taxon>
        <taxon>Ascomycota</taxon>
        <taxon>Saccharomycotina</taxon>
        <taxon>Saccharomycetes</taxon>
        <taxon>Saccharomycetales</taxon>
        <taxon>Saccharomycetaceae</taxon>
        <taxon>Saccharomyces</taxon>
    </lineage>
</organism>
<protein>
    <recommendedName>
        <fullName>E3 ubiquitin-protein ligase BRE1</fullName>
        <ecNumber evidence="4">2.3.2.27</ecNumber>
    </recommendedName>
    <alternativeName>
        <fullName>Brefeldin A-sensitivity protein 1</fullName>
    </alternativeName>
    <alternativeName>
        <fullName evidence="10">RING-type E3 ubiquitin transferase BRE1</fullName>
    </alternativeName>
</protein>
<reference key="1">
    <citation type="journal article" date="1997" name="Nature">
        <title>The nucleotide sequence of Saccharomyces cerevisiae chromosome IV.</title>
        <authorList>
            <person name="Jacq C."/>
            <person name="Alt-Moerbe J."/>
            <person name="Andre B."/>
            <person name="Arnold W."/>
            <person name="Bahr A."/>
            <person name="Ballesta J.P.G."/>
            <person name="Bargues M."/>
            <person name="Baron L."/>
            <person name="Becker A."/>
            <person name="Biteau N."/>
            <person name="Bloecker H."/>
            <person name="Blugeon C."/>
            <person name="Boskovic J."/>
            <person name="Brandt P."/>
            <person name="Brueckner M."/>
            <person name="Buitrago M.J."/>
            <person name="Coster F."/>
            <person name="Delaveau T."/>
            <person name="del Rey F."/>
            <person name="Dujon B."/>
            <person name="Eide L.G."/>
            <person name="Garcia-Cantalejo J.M."/>
            <person name="Goffeau A."/>
            <person name="Gomez-Peris A."/>
            <person name="Granotier C."/>
            <person name="Hanemann V."/>
            <person name="Hankeln T."/>
            <person name="Hoheisel J.D."/>
            <person name="Jaeger W."/>
            <person name="Jimenez A."/>
            <person name="Jonniaux J.-L."/>
            <person name="Kraemer C."/>
            <person name="Kuester H."/>
            <person name="Laamanen P."/>
            <person name="Legros Y."/>
            <person name="Louis E.J."/>
            <person name="Moeller-Rieker S."/>
            <person name="Monnet A."/>
            <person name="Moro M."/>
            <person name="Mueller-Auer S."/>
            <person name="Nussbaumer B."/>
            <person name="Paricio N."/>
            <person name="Paulin L."/>
            <person name="Perea J."/>
            <person name="Perez-Alonso M."/>
            <person name="Perez-Ortin J.E."/>
            <person name="Pohl T.M."/>
            <person name="Prydz H."/>
            <person name="Purnelle B."/>
            <person name="Rasmussen S.W."/>
            <person name="Remacha M.A."/>
            <person name="Revuelta J.L."/>
            <person name="Rieger M."/>
            <person name="Salom D."/>
            <person name="Saluz H.P."/>
            <person name="Saiz J.E."/>
            <person name="Saren A.-M."/>
            <person name="Schaefer M."/>
            <person name="Scharfe M."/>
            <person name="Schmidt E.R."/>
            <person name="Schneider C."/>
            <person name="Scholler P."/>
            <person name="Schwarz S."/>
            <person name="Soler-Mira A."/>
            <person name="Urrestarazu L.A."/>
            <person name="Verhasselt P."/>
            <person name="Vissers S."/>
            <person name="Voet M."/>
            <person name="Volckaert G."/>
            <person name="Wagner G."/>
            <person name="Wambutt R."/>
            <person name="Wedler E."/>
            <person name="Wedler H."/>
            <person name="Woelfl S."/>
            <person name="Harris D.E."/>
            <person name="Bowman S."/>
            <person name="Brown D."/>
            <person name="Churcher C.M."/>
            <person name="Connor R."/>
            <person name="Dedman K."/>
            <person name="Gentles S."/>
            <person name="Hamlin N."/>
            <person name="Hunt S."/>
            <person name="Jones L."/>
            <person name="McDonald S."/>
            <person name="Murphy L.D."/>
            <person name="Niblett D."/>
            <person name="Odell C."/>
            <person name="Oliver K."/>
            <person name="Rajandream M.A."/>
            <person name="Richards C."/>
            <person name="Shore L."/>
            <person name="Walsh S.V."/>
            <person name="Barrell B.G."/>
            <person name="Dietrich F.S."/>
            <person name="Mulligan J.T."/>
            <person name="Allen E."/>
            <person name="Araujo R."/>
            <person name="Aviles E."/>
            <person name="Berno A."/>
            <person name="Carpenter J."/>
            <person name="Chen E."/>
            <person name="Cherry J.M."/>
            <person name="Chung E."/>
            <person name="Duncan M."/>
            <person name="Hunicke-Smith S."/>
            <person name="Hyman R.W."/>
            <person name="Komp C."/>
            <person name="Lashkari D."/>
            <person name="Lew H."/>
            <person name="Lin D."/>
            <person name="Mosedale D."/>
            <person name="Nakahara K."/>
            <person name="Namath A."/>
            <person name="Oefner P."/>
            <person name="Oh C."/>
            <person name="Petel F.X."/>
            <person name="Roberts D."/>
            <person name="Schramm S."/>
            <person name="Schroeder M."/>
            <person name="Shogren T."/>
            <person name="Shroff N."/>
            <person name="Winant A."/>
            <person name="Yelton M.A."/>
            <person name="Botstein D."/>
            <person name="Davis R.W."/>
            <person name="Johnston M."/>
            <person name="Andrews S."/>
            <person name="Brinkman R."/>
            <person name="Cooper J."/>
            <person name="Ding H."/>
            <person name="Du Z."/>
            <person name="Favello A."/>
            <person name="Fulton L."/>
            <person name="Gattung S."/>
            <person name="Greco T."/>
            <person name="Hallsworth K."/>
            <person name="Hawkins J."/>
            <person name="Hillier L.W."/>
            <person name="Jier M."/>
            <person name="Johnson D."/>
            <person name="Johnston L."/>
            <person name="Kirsten J."/>
            <person name="Kucaba T."/>
            <person name="Langston Y."/>
            <person name="Latreille P."/>
            <person name="Le T."/>
            <person name="Mardis E."/>
            <person name="Menezes S."/>
            <person name="Miller N."/>
            <person name="Nhan M."/>
            <person name="Pauley A."/>
            <person name="Peluso D."/>
            <person name="Rifkin L."/>
            <person name="Riles L."/>
            <person name="Taich A."/>
            <person name="Trevaskis E."/>
            <person name="Vignati D."/>
            <person name="Wilcox L."/>
            <person name="Wohldman P."/>
            <person name="Vaudin M."/>
            <person name="Wilson R."/>
            <person name="Waterston R."/>
            <person name="Albermann K."/>
            <person name="Hani J."/>
            <person name="Heumann K."/>
            <person name="Kleine K."/>
            <person name="Mewes H.-W."/>
            <person name="Zollner A."/>
            <person name="Zaccaria P."/>
        </authorList>
    </citation>
    <scope>NUCLEOTIDE SEQUENCE [LARGE SCALE GENOMIC DNA]</scope>
    <source>
        <strain>ATCC 204508 / S288c</strain>
    </source>
</reference>
<reference key="2">
    <citation type="journal article" date="2014" name="G3 (Bethesda)">
        <title>The reference genome sequence of Saccharomyces cerevisiae: Then and now.</title>
        <authorList>
            <person name="Engel S.R."/>
            <person name="Dietrich F.S."/>
            <person name="Fisk D.G."/>
            <person name="Binkley G."/>
            <person name="Balakrishnan R."/>
            <person name="Costanzo M.C."/>
            <person name="Dwight S.S."/>
            <person name="Hitz B.C."/>
            <person name="Karra K."/>
            <person name="Nash R.S."/>
            <person name="Weng S."/>
            <person name="Wong E.D."/>
            <person name="Lloyd P."/>
            <person name="Skrzypek M.S."/>
            <person name="Miyasato S.R."/>
            <person name="Simison M."/>
            <person name="Cherry J.M."/>
        </authorList>
    </citation>
    <scope>GENOME REANNOTATION</scope>
    <source>
        <strain>ATCC 204508 / S288c</strain>
    </source>
</reference>
<reference key="3">
    <citation type="journal article" date="2003" name="J. Biol. Chem.">
        <title>The Paf1 complex is essential for histone monoubiquitination by the Rad6-Bre1 complex, which signals for histone methylation by COMPASS and Dot1p.</title>
        <authorList>
            <person name="Wood A."/>
            <person name="Schneider J."/>
            <person name="Dover J."/>
            <person name="Johnston M."/>
            <person name="Shilatifard A."/>
        </authorList>
    </citation>
    <scope>FUNCTION</scope>
</reference>
<reference key="4">
    <citation type="journal article" date="2003" name="Mol. Cell">
        <title>A conserved RING finger protein required for histone H2B monoubiquitination and cell size control.</title>
        <authorList>
            <person name="Hwang W.W."/>
            <person name="Venkatasubrahmanyam S."/>
            <person name="Ianculescu A.G."/>
            <person name="Tong A."/>
            <person name="Boone C."/>
            <person name="Madhani H.D."/>
        </authorList>
    </citation>
    <scope>FUNCTION</scope>
    <scope>CATALYTIC ACTIVITY</scope>
    <scope>INTERACTION WITH LGE1</scope>
</reference>
<reference key="5">
    <citation type="journal article" date="2003" name="Mol. Cell">
        <title>Bre1, an E3 ubiquitin ligase required for recruitment and substrate selection of Rad6 at a promoter.</title>
        <authorList>
            <person name="Wood A."/>
            <person name="Krogan N.J."/>
            <person name="Dover J."/>
            <person name="Schneider J."/>
            <person name="Heidt J."/>
            <person name="Boateng M.A."/>
            <person name="Dean K."/>
            <person name="Golshani A."/>
            <person name="Zhang Y."/>
            <person name="Greenblatt J.F."/>
            <person name="Johnston M."/>
            <person name="Shilatifard A."/>
        </authorList>
    </citation>
    <scope>FUNCTION</scope>
    <scope>MUTAGENESIS OF CYS-663 AND HIS-665</scope>
</reference>
<reference key="6">
    <citation type="journal article" date="2003" name="Nature">
        <title>Global analysis of protein localization in budding yeast.</title>
        <authorList>
            <person name="Huh W.-K."/>
            <person name="Falvo J.V."/>
            <person name="Gerke L.C."/>
            <person name="Carroll A.S."/>
            <person name="Howson R.W."/>
            <person name="Weissman J.S."/>
            <person name="O'Shea E.K."/>
        </authorList>
    </citation>
    <scope>SUBCELLULAR LOCATION [LARGE SCALE ANALYSIS]</scope>
</reference>
<reference key="7">
    <citation type="journal article" date="2003" name="Nature">
        <title>Global analysis of protein expression in yeast.</title>
        <authorList>
            <person name="Ghaemmaghami S."/>
            <person name="Huh W.-K."/>
            <person name="Bower K."/>
            <person name="Howson R.W."/>
            <person name="Belle A."/>
            <person name="Dephoure N."/>
            <person name="O'Shea E.K."/>
            <person name="Weissman J.S."/>
        </authorList>
    </citation>
    <scope>LEVEL OF PROTEIN EXPRESSION [LARGE SCALE ANALYSIS]</scope>
</reference>
<reference key="8">
    <citation type="journal article" date="2004" name="Proc. Natl. Acad. Sci. U.S.A.">
        <title>Rad6-Bre1-mediated histone H2B ubiquitylation modulates the formation of double-strand breaks during meiosis.</title>
        <authorList>
            <person name="Yamashita K."/>
            <person name="Shinohara M."/>
            <person name="Shinohara A."/>
        </authorList>
    </citation>
    <scope>FUNCTION</scope>
</reference>
<reference key="9">
    <citation type="journal article" date="2005" name="Mol. Cell. Biol.">
        <title>Histone H2B ubiquitylation is associated with elongating RNA polymerase II.</title>
        <authorList>
            <person name="Xiao T."/>
            <person name="Kao C.-F."/>
            <person name="Krogan N.J."/>
            <person name="Sun Z.-W."/>
            <person name="Greenblatt J.F."/>
            <person name="Osley M.A."/>
            <person name="Strahl B.D."/>
        </authorList>
    </citation>
    <scope>FUNCTION</scope>
</reference>
<evidence type="ECO:0000255" key="1"/>
<evidence type="ECO:0000255" key="2">
    <source>
        <dbReference type="PROSITE-ProRule" id="PRU00175"/>
    </source>
</evidence>
<evidence type="ECO:0000256" key="3">
    <source>
        <dbReference type="SAM" id="MobiDB-lite"/>
    </source>
</evidence>
<evidence type="ECO:0000269" key="4">
    <source>
    </source>
</evidence>
<evidence type="ECO:0000269" key="5">
    <source>
    </source>
</evidence>
<evidence type="ECO:0000269" key="6">
    <source>
    </source>
</evidence>
<evidence type="ECO:0000269" key="7">
    <source>
    </source>
</evidence>
<evidence type="ECO:0000269" key="8">
    <source>
    </source>
</evidence>
<evidence type="ECO:0000269" key="9">
    <source>
    </source>
</evidence>
<evidence type="ECO:0000305" key="10"/>
<evidence type="ECO:0000305" key="11">
    <source>
    </source>
</evidence>
<evidence type="ECO:0007829" key="12">
    <source>
        <dbReference type="PDB" id="4R7E"/>
    </source>
</evidence>
<evidence type="ECO:0007829" key="13">
    <source>
        <dbReference type="PDB" id="7UV8"/>
    </source>
</evidence>
<evidence type="ECO:0007829" key="14">
    <source>
        <dbReference type="PDB" id="7UVC"/>
    </source>
</evidence>
<evidence type="ECO:0007829" key="15">
    <source>
        <dbReference type="PDB" id="8T3T"/>
    </source>
</evidence>
<name>BRE1_YEAST</name>
<gene>
    <name type="primary">BRE1</name>
    <name type="ordered locus">YDL074C</name>
</gene>
<feature type="chain" id="PRO_0000055857" description="E3 ubiquitin-protein ligase BRE1">
    <location>
        <begin position="1"/>
        <end position="700"/>
    </location>
</feature>
<feature type="zinc finger region" description="RING-type" evidence="2">
    <location>
        <begin position="648"/>
        <end position="687"/>
    </location>
</feature>
<feature type="region of interest" description="Disordered" evidence="3">
    <location>
        <begin position="200"/>
        <end position="250"/>
    </location>
</feature>
<feature type="coiled-coil region" evidence="1">
    <location>
        <begin position="126"/>
        <end position="406"/>
    </location>
</feature>
<feature type="coiled-coil region" evidence="1">
    <location>
        <begin position="555"/>
        <end position="620"/>
    </location>
</feature>
<feature type="compositionally biased region" description="Basic and acidic residues" evidence="3">
    <location>
        <begin position="200"/>
        <end position="209"/>
    </location>
</feature>
<feature type="compositionally biased region" description="Polar residues" evidence="3">
    <location>
        <begin position="210"/>
        <end position="227"/>
    </location>
</feature>
<feature type="compositionally biased region" description="Basic and acidic residues" evidence="3">
    <location>
        <begin position="228"/>
        <end position="250"/>
    </location>
</feature>
<feature type="mutagenesis site" description="Abolishes ability to monoubiquitinate histone H2B." evidence="5">
    <original>C</original>
    <variation>A</variation>
    <location>
        <position position="663"/>
    </location>
</feature>
<feature type="mutagenesis site" description="Abolishes ability to monoubiquitinate histone H2B." evidence="5">
    <original>H</original>
    <variation>A</variation>
    <location>
        <position position="665"/>
    </location>
</feature>
<feature type="strand" evidence="14">
    <location>
        <begin position="17"/>
        <end position="19"/>
    </location>
</feature>
<feature type="helix" evidence="13">
    <location>
        <begin position="23"/>
        <end position="82"/>
    </location>
</feature>
<feature type="helix" evidence="13">
    <location>
        <begin position="87"/>
        <end position="97"/>
    </location>
</feature>
<feature type="helix" evidence="13">
    <location>
        <begin position="101"/>
        <end position="119"/>
    </location>
</feature>
<feature type="helix" evidence="13">
    <location>
        <begin position="132"/>
        <end position="180"/>
    </location>
</feature>
<feature type="helix" evidence="13">
    <location>
        <begin position="184"/>
        <end position="190"/>
    </location>
</feature>
<feature type="helix" evidence="12">
    <location>
        <begin position="633"/>
        <end position="646"/>
    </location>
</feature>
<feature type="turn" evidence="12">
    <location>
        <begin position="649"/>
        <end position="651"/>
    </location>
</feature>
<feature type="strand" evidence="12">
    <location>
        <begin position="652"/>
        <end position="655"/>
    </location>
</feature>
<feature type="strand" evidence="12">
    <location>
        <begin position="658"/>
        <end position="660"/>
    </location>
</feature>
<feature type="turn" evidence="12">
    <location>
        <begin position="661"/>
        <end position="663"/>
    </location>
</feature>
<feature type="strand" evidence="15">
    <location>
        <begin position="665"/>
        <end position="667"/>
    </location>
</feature>
<feature type="helix" evidence="12">
    <location>
        <begin position="669"/>
        <end position="677"/>
    </location>
</feature>
<feature type="turn" evidence="12">
    <location>
        <begin position="684"/>
        <end position="686"/>
    </location>
</feature>
<feature type="helix" evidence="12">
    <location>
        <begin position="692"/>
        <end position="694"/>
    </location>
</feature>
<feature type="strand" evidence="12">
    <location>
        <begin position="695"/>
        <end position="697"/>
    </location>
</feature>
<proteinExistence type="evidence at protein level"/>
<sequence length="700" mass="80692">MTAEPATKKIKLELSDPSEPLTQSDVIAFQKEALFRCINRRRVDFEALRKQYELSRRECIDVSRKLANIMALIVTLARFIETFCTDANEKQLCREIAQGDETLIVQRSDSFMKLLTKYGKPNTTDSNTNSNASDHIQELTTELKNLRKSKEELFYENSQLTEEISALKEYYTNIIRKYDRDESFTIKRVFKEDKTDAVKELREDEKESNENNIKSGNKDSSAINGDNTSKKSEKGDELVQAEDERKEDAENEKLELDLKFSDLRAEINSLSSTIKDLENIRRENEEELIKTRSEVSNLKKQQIAAADQDPDFKSYDHESLLAKIQHLTEQNAELSEINSSFLSKFQVLAKEKEIYTKKVREEFQKSLDSLVEMNSSLEKDVVRIRTARDDLLSKIAILEAEKSKTEVLSDLQHAIDILKEQWTKIDQRSNDTKSSSTQDALIKEIQDLEKGFRELSDLTHKKYSEIINHESVISKLTVEKTKADQKYFAAMRSKDSILIEIKTLSKSLSKSNELILQLKDSDRLLQQKIGNLHKQLDLSQNNERRLIDSSKTETLKIIDLNNTSTKLKRSLEKLQEESNKSIADMTHLETKLNDTEIELKHFKQKASHLESKCEKLHDTLFRGNNKNKGSSDEALVEELANFRTLVYCSLCSKNWKNMAIKTCGHVFCENCCKERLAARMRKCPTCNKAFSSNDLLTVHL</sequence>
<accession>Q07457</accession>
<accession>D6VRS5</accession>
<comment type="function">
    <text evidence="4 5 6 8 9">E3 ubiquitin-protein ligase that mediates monoubiquitination of histone H2B to form H2BK123ub1 in association with the E2 enzyme RAD6/UBC2. H2BK123ub1 gives a specific tag for epigenetic transcriptional activation, elongation by RNA polymerase II, telomeric silencing, and is also a prerequisite for H3K4me and H3K79me formation. It thereby plays a central role in histone code and gene regulation. Also modulates the formation of double-strand breaks during meiosis.</text>
</comment>
<comment type="catalytic activity">
    <reaction evidence="4">
        <text>S-ubiquitinyl-[E2 ubiquitin-conjugating enzyme]-L-cysteine + [acceptor protein]-L-lysine = [E2 ubiquitin-conjugating enzyme]-L-cysteine + N(6)-ubiquitinyl-[acceptor protein]-L-lysine.</text>
        <dbReference type="EC" id="2.3.2.27"/>
    </reaction>
</comment>
<comment type="pathway">
    <text>Protein modification; protein ubiquitination.</text>
</comment>
<comment type="subunit">
    <text>Forms a complex with the E2 enzyme RAD6/UBC2. May interact with LGE1.</text>
</comment>
<comment type="interaction">
    <interactant intactId="EBI-31563">
        <id>Q07457</id>
    </interactant>
    <interactant intactId="EBI-31563">
        <id>Q07457</id>
        <label>BRE1</label>
    </interactant>
    <organismsDiffer>false</organismsDiffer>
    <experiments>6</experiments>
</comment>
<comment type="interaction">
    <interactant intactId="EBI-31563">
        <id>Q07457</id>
    </interactant>
    <interactant intactId="EBI-19722">
        <id>P06104</id>
        <label>RAD6</label>
    </interactant>
    <organismsDiffer>false</organismsDiffer>
    <experiments>4</experiments>
</comment>
<comment type="subcellular location">
    <subcellularLocation>
        <location evidence="11">Nucleus</location>
    </subcellularLocation>
</comment>
<comment type="miscellaneous">
    <text evidence="7">Present with 2980 molecules/cell in log phase SD medium.</text>
</comment>
<comment type="similarity">
    <text evidence="10">Belongs to the BRE1 family.</text>
</comment>
<dbReference type="EC" id="2.3.2.27" evidence="4"/>
<dbReference type="EMBL" id="Z74122">
    <property type="protein sequence ID" value="CAA98640.1"/>
    <property type="molecule type" value="Genomic_DNA"/>
</dbReference>
<dbReference type="EMBL" id="BK006938">
    <property type="protein sequence ID" value="DAA11785.1"/>
    <property type="molecule type" value="Genomic_DNA"/>
</dbReference>
<dbReference type="PIR" id="S67610">
    <property type="entry name" value="S67610"/>
</dbReference>
<dbReference type="RefSeq" id="NP_010209.1">
    <property type="nucleotide sequence ID" value="NM_001180133.1"/>
</dbReference>
<dbReference type="PDB" id="4R7E">
    <property type="method" value="X-ray"/>
    <property type="resolution" value="2.25 A"/>
    <property type="chains" value="A=632-700"/>
</dbReference>
<dbReference type="PDB" id="7UV8">
    <property type="method" value="X-ray"/>
    <property type="resolution" value="2.70 A"/>
    <property type="chains" value="U/V=1-212"/>
</dbReference>
<dbReference type="PDB" id="7UVC">
    <property type="method" value="X-ray"/>
    <property type="resolution" value="3.05 A"/>
    <property type="chains" value="U/V=1-212"/>
</dbReference>
<dbReference type="PDB" id="8IEG">
    <property type="method" value="EM"/>
    <property type="resolution" value="3.44 A"/>
    <property type="chains" value="A/B=637-700"/>
</dbReference>
<dbReference type="PDB" id="8T3T">
    <property type="method" value="EM"/>
    <property type="resolution" value="3.21 A"/>
    <property type="chains" value="K/L=591-700"/>
</dbReference>
<dbReference type="PDB" id="8T3W">
    <property type="method" value="EM"/>
    <property type="resolution" value="3.25 A"/>
    <property type="chains" value="K/L=591-700"/>
</dbReference>
<dbReference type="PDB" id="8T3Y">
    <property type="method" value="EM"/>
    <property type="resolution" value="3.47 A"/>
    <property type="chains" value="K/L=591-700"/>
</dbReference>
<dbReference type="PDBsum" id="4R7E"/>
<dbReference type="PDBsum" id="7UV8"/>
<dbReference type="PDBsum" id="7UVC"/>
<dbReference type="PDBsum" id="8IEG"/>
<dbReference type="PDBsum" id="8T3T"/>
<dbReference type="PDBsum" id="8T3W"/>
<dbReference type="PDBsum" id="8T3Y"/>
<dbReference type="EMDB" id="EMD-35381"/>
<dbReference type="EMDB" id="EMD-41011"/>
<dbReference type="EMDB" id="EMD-41015"/>
<dbReference type="EMDB" id="EMD-41016"/>
<dbReference type="SASBDB" id="Q07457"/>
<dbReference type="SMR" id="Q07457"/>
<dbReference type="BioGRID" id="31987">
    <property type="interactions" value="850"/>
</dbReference>
<dbReference type="ComplexPortal" id="CPX-2910">
    <property type="entry name" value="BRE1-RAD6 ubiquitin ligase complex"/>
</dbReference>
<dbReference type="ComplexPortal" id="CPX-2911">
    <property type="entry name" value="BRE1 E3 ubiquitin-protein ligase complex"/>
</dbReference>
<dbReference type="DIP" id="DIP-2999N"/>
<dbReference type="FunCoup" id="Q07457">
    <property type="interactions" value="1082"/>
</dbReference>
<dbReference type="IntAct" id="Q07457">
    <property type="interactions" value="79"/>
</dbReference>
<dbReference type="MINT" id="Q07457"/>
<dbReference type="STRING" id="4932.YDL074C"/>
<dbReference type="iPTMnet" id="Q07457"/>
<dbReference type="PaxDb" id="4932-YDL074C"/>
<dbReference type="PeptideAtlas" id="Q07457"/>
<dbReference type="EnsemblFungi" id="YDL074C_mRNA">
    <property type="protein sequence ID" value="YDL074C"/>
    <property type="gene ID" value="YDL074C"/>
</dbReference>
<dbReference type="GeneID" id="851485"/>
<dbReference type="KEGG" id="sce:YDL074C"/>
<dbReference type="AGR" id="SGD:S000002232"/>
<dbReference type="SGD" id="S000002232">
    <property type="gene designation" value="BRE1"/>
</dbReference>
<dbReference type="VEuPathDB" id="FungiDB:YDL074C"/>
<dbReference type="eggNOG" id="KOG0978">
    <property type="taxonomic scope" value="Eukaryota"/>
</dbReference>
<dbReference type="GeneTree" id="ENSGT00390000002866"/>
<dbReference type="HOGENOM" id="CLU_019713_1_0_1"/>
<dbReference type="InParanoid" id="Q07457"/>
<dbReference type="OMA" id="YRQMQEY"/>
<dbReference type="OrthoDB" id="654191at2759"/>
<dbReference type="BioCyc" id="YEAST:G3O-29485-MONOMER"/>
<dbReference type="UniPathway" id="UPA00143"/>
<dbReference type="BioGRID-ORCS" id="851485">
    <property type="hits" value="0 hits in 10 CRISPR screens"/>
</dbReference>
<dbReference type="CD-CODE" id="4081D115">
    <property type="entry name" value="Synthetic Condensate 000341"/>
</dbReference>
<dbReference type="CD-CODE" id="8339491E">
    <property type="entry name" value="Synthetic Condensate 000329"/>
</dbReference>
<dbReference type="EvolutionaryTrace" id="Q07457"/>
<dbReference type="PRO" id="PR:Q07457"/>
<dbReference type="Proteomes" id="UP000002311">
    <property type="component" value="Chromosome IV"/>
</dbReference>
<dbReference type="RNAct" id="Q07457">
    <property type="molecule type" value="protein"/>
</dbReference>
<dbReference type="GO" id="GO:0000785">
    <property type="term" value="C:chromatin"/>
    <property type="evidence" value="ECO:0000314"/>
    <property type="project" value="SGD"/>
</dbReference>
<dbReference type="GO" id="GO:0000781">
    <property type="term" value="C:chromosome, telomeric region"/>
    <property type="evidence" value="ECO:0007669"/>
    <property type="project" value="GOC"/>
</dbReference>
<dbReference type="GO" id="GO:0033503">
    <property type="term" value="C:HULC complex"/>
    <property type="evidence" value="ECO:0000318"/>
    <property type="project" value="GO_Central"/>
</dbReference>
<dbReference type="GO" id="GO:0005634">
    <property type="term" value="C:nucleus"/>
    <property type="evidence" value="ECO:0000314"/>
    <property type="project" value="SGD"/>
</dbReference>
<dbReference type="GO" id="GO:0003688">
    <property type="term" value="F:DNA replication origin binding"/>
    <property type="evidence" value="ECO:0000314"/>
    <property type="project" value="SGD"/>
</dbReference>
<dbReference type="GO" id="GO:0042802">
    <property type="term" value="F:identical protein binding"/>
    <property type="evidence" value="ECO:0000353"/>
    <property type="project" value="IntAct"/>
</dbReference>
<dbReference type="GO" id="GO:0097110">
    <property type="term" value="F:scaffold protein binding"/>
    <property type="evidence" value="ECO:0000353"/>
    <property type="project" value="SGD"/>
</dbReference>
<dbReference type="GO" id="GO:0061630">
    <property type="term" value="F:ubiquitin protein ligase activity"/>
    <property type="evidence" value="ECO:0000314"/>
    <property type="project" value="SGD"/>
</dbReference>
<dbReference type="GO" id="GO:0008270">
    <property type="term" value="F:zinc ion binding"/>
    <property type="evidence" value="ECO:0007669"/>
    <property type="project" value="UniProtKB-KW"/>
</dbReference>
<dbReference type="GO" id="GO:0000724">
    <property type="term" value="P:double-strand break repair via homologous recombination"/>
    <property type="evidence" value="ECO:0000316"/>
    <property type="project" value="SGD"/>
</dbReference>
<dbReference type="GO" id="GO:0042138">
    <property type="term" value="P:meiotic DNA double-strand break formation"/>
    <property type="evidence" value="ECO:0000315"/>
    <property type="project" value="SGD"/>
</dbReference>
<dbReference type="GO" id="GO:0031571">
    <property type="term" value="P:mitotic G1 DNA damage checkpoint signaling"/>
    <property type="evidence" value="ECO:0000315"/>
    <property type="project" value="SGD"/>
</dbReference>
<dbReference type="GO" id="GO:0031573">
    <property type="term" value="P:mitotic intra-S DNA damage checkpoint signaling"/>
    <property type="evidence" value="ECO:0000315"/>
    <property type="project" value="SGD"/>
</dbReference>
<dbReference type="GO" id="GO:0016567">
    <property type="term" value="P:protein ubiquitination"/>
    <property type="evidence" value="ECO:0007669"/>
    <property type="project" value="UniProtKB-UniPathway"/>
</dbReference>
<dbReference type="GO" id="GO:0030174">
    <property type="term" value="P:regulation of DNA-templated DNA replication initiation"/>
    <property type="evidence" value="ECO:0000315"/>
    <property type="project" value="SGD"/>
</dbReference>
<dbReference type="GO" id="GO:0031509">
    <property type="term" value="P:subtelomeric heterochromatin formation"/>
    <property type="evidence" value="ECO:0000315"/>
    <property type="project" value="SGD"/>
</dbReference>
<dbReference type="GO" id="GO:0000722">
    <property type="term" value="P:telomere maintenance via recombination"/>
    <property type="evidence" value="ECO:0000316"/>
    <property type="project" value="SGD"/>
</dbReference>
<dbReference type="GO" id="GO:0006366">
    <property type="term" value="P:transcription by RNA polymerase II"/>
    <property type="evidence" value="ECO:0000316"/>
    <property type="project" value="SGD"/>
</dbReference>
<dbReference type="CDD" id="cd16499">
    <property type="entry name" value="RING-HC_Bre1-like"/>
    <property type="match status" value="1"/>
</dbReference>
<dbReference type="FunFam" id="3.30.40.10:FF:000414">
    <property type="entry name" value="E3 ubiquitin protein ligase"/>
    <property type="match status" value="1"/>
</dbReference>
<dbReference type="Gene3D" id="3.30.40.10">
    <property type="entry name" value="Zinc/RING finger domain, C3HC4 (zinc finger)"/>
    <property type="match status" value="1"/>
</dbReference>
<dbReference type="InterPro" id="IPR013956">
    <property type="entry name" value="E3_ubiquit_lig_Bre1"/>
</dbReference>
<dbReference type="InterPro" id="IPR013087">
    <property type="entry name" value="Znf_C2H2_type"/>
</dbReference>
<dbReference type="InterPro" id="IPR018957">
    <property type="entry name" value="Znf_C3HC4_RING-type"/>
</dbReference>
<dbReference type="InterPro" id="IPR001841">
    <property type="entry name" value="Znf_RING"/>
</dbReference>
<dbReference type="InterPro" id="IPR013083">
    <property type="entry name" value="Znf_RING/FYVE/PHD"/>
</dbReference>
<dbReference type="PANTHER" id="PTHR23163:SF0">
    <property type="entry name" value="E3 UBIQUITIN-PROTEIN LIGASE BRE1"/>
    <property type="match status" value="1"/>
</dbReference>
<dbReference type="PANTHER" id="PTHR23163">
    <property type="entry name" value="RING FINGER PROTEIN-RELATED"/>
    <property type="match status" value="1"/>
</dbReference>
<dbReference type="Pfam" id="PF08647">
    <property type="entry name" value="BRE1"/>
    <property type="match status" value="1"/>
</dbReference>
<dbReference type="Pfam" id="PF00097">
    <property type="entry name" value="zf-C3HC4"/>
    <property type="match status" value="1"/>
</dbReference>
<dbReference type="SMART" id="SM00184">
    <property type="entry name" value="RING"/>
    <property type="match status" value="1"/>
</dbReference>
<dbReference type="SUPFAM" id="SSF57850">
    <property type="entry name" value="RING/U-box"/>
    <property type="match status" value="1"/>
</dbReference>
<dbReference type="PROSITE" id="PS50089">
    <property type="entry name" value="ZF_RING_2"/>
    <property type="match status" value="1"/>
</dbReference>